<gene>
    <name evidence="1" type="primary">hfq</name>
    <name type="ordered locus">BT9727_3458</name>
</gene>
<dbReference type="EMBL" id="AE017355">
    <property type="protein sequence ID" value="AAT61639.1"/>
    <property type="molecule type" value="Genomic_DNA"/>
</dbReference>
<dbReference type="RefSeq" id="WP_000813896.1">
    <property type="nucleotide sequence ID" value="NC_005957.1"/>
</dbReference>
<dbReference type="RefSeq" id="YP_037778.1">
    <property type="nucleotide sequence ID" value="NC_005957.1"/>
</dbReference>
<dbReference type="SMR" id="Q6HF98"/>
<dbReference type="GeneID" id="93007416"/>
<dbReference type="KEGG" id="btk:BT9727_3458"/>
<dbReference type="PATRIC" id="fig|281309.8.peg.3692"/>
<dbReference type="HOGENOM" id="CLU_113688_3_0_9"/>
<dbReference type="PRO" id="PR:Q6HF98"/>
<dbReference type="Proteomes" id="UP000001301">
    <property type="component" value="Chromosome"/>
</dbReference>
<dbReference type="GO" id="GO:0005829">
    <property type="term" value="C:cytosol"/>
    <property type="evidence" value="ECO:0007669"/>
    <property type="project" value="TreeGrafter"/>
</dbReference>
<dbReference type="GO" id="GO:0003723">
    <property type="term" value="F:RNA binding"/>
    <property type="evidence" value="ECO:0007669"/>
    <property type="project" value="UniProtKB-UniRule"/>
</dbReference>
<dbReference type="GO" id="GO:0006355">
    <property type="term" value="P:regulation of DNA-templated transcription"/>
    <property type="evidence" value="ECO:0007669"/>
    <property type="project" value="InterPro"/>
</dbReference>
<dbReference type="GO" id="GO:0043487">
    <property type="term" value="P:regulation of RNA stability"/>
    <property type="evidence" value="ECO:0007669"/>
    <property type="project" value="TreeGrafter"/>
</dbReference>
<dbReference type="GO" id="GO:0045974">
    <property type="term" value="P:regulation of translation, ncRNA-mediated"/>
    <property type="evidence" value="ECO:0007669"/>
    <property type="project" value="TreeGrafter"/>
</dbReference>
<dbReference type="CDD" id="cd01716">
    <property type="entry name" value="Hfq"/>
    <property type="match status" value="1"/>
</dbReference>
<dbReference type="FunFam" id="2.30.30.100:FF:000012">
    <property type="entry name" value="RNA-binding protein Hfq"/>
    <property type="match status" value="1"/>
</dbReference>
<dbReference type="Gene3D" id="2.30.30.100">
    <property type="match status" value="1"/>
</dbReference>
<dbReference type="HAMAP" id="MF_00436">
    <property type="entry name" value="Hfq"/>
    <property type="match status" value="1"/>
</dbReference>
<dbReference type="InterPro" id="IPR005001">
    <property type="entry name" value="Hfq"/>
</dbReference>
<dbReference type="InterPro" id="IPR010920">
    <property type="entry name" value="LSM_dom_sf"/>
</dbReference>
<dbReference type="InterPro" id="IPR047575">
    <property type="entry name" value="Sm"/>
</dbReference>
<dbReference type="NCBIfam" id="TIGR02383">
    <property type="entry name" value="Hfq"/>
    <property type="match status" value="1"/>
</dbReference>
<dbReference type="NCBIfam" id="NF001602">
    <property type="entry name" value="PRK00395.1"/>
    <property type="match status" value="1"/>
</dbReference>
<dbReference type="PANTHER" id="PTHR34772">
    <property type="entry name" value="RNA-BINDING PROTEIN HFQ"/>
    <property type="match status" value="1"/>
</dbReference>
<dbReference type="PANTHER" id="PTHR34772:SF1">
    <property type="entry name" value="RNA-BINDING PROTEIN HFQ"/>
    <property type="match status" value="1"/>
</dbReference>
<dbReference type="Pfam" id="PF17209">
    <property type="entry name" value="Hfq"/>
    <property type="match status" value="1"/>
</dbReference>
<dbReference type="SUPFAM" id="SSF50182">
    <property type="entry name" value="Sm-like ribonucleoproteins"/>
    <property type="match status" value="1"/>
</dbReference>
<dbReference type="PROSITE" id="PS52002">
    <property type="entry name" value="SM"/>
    <property type="match status" value="1"/>
</dbReference>
<comment type="function">
    <text evidence="1">RNA chaperone that binds small regulatory RNA (sRNAs) and mRNAs to facilitate mRNA translational regulation in response to envelope stress, environmental stress and changes in metabolite concentrations. Also binds with high specificity to tRNAs.</text>
</comment>
<comment type="subunit">
    <text evidence="1">Homohexamer.</text>
</comment>
<comment type="similarity">
    <text evidence="1">Belongs to the Hfq family.</text>
</comment>
<keyword id="KW-0694">RNA-binding</keyword>
<keyword id="KW-0346">Stress response</keyword>
<evidence type="ECO:0000255" key="1">
    <source>
        <dbReference type="HAMAP-Rule" id="MF_00436"/>
    </source>
</evidence>
<evidence type="ECO:0000255" key="2">
    <source>
        <dbReference type="PROSITE-ProRule" id="PRU01346"/>
    </source>
</evidence>
<accession>Q6HF98</accession>
<protein>
    <recommendedName>
        <fullName evidence="1">RNA-binding protein Hfq</fullName>
    </recommendedName>
</protein>
<proteinExistence type="inferred from homology"/>
<sequence length="74" mass="8646">MKQSINIQDQFLNQLRKENTFVTLYLLNGFQLRGLIKGFDNFTVLLETEGKQQLIYKHAISTFVPQKNVSIELE</sequence>
<reference key="1">
    <citation type="journal article" date="2006" name="J. Bacteriol.">
        <title>Pathogenomic sequence analysis of Bacillus cereus and Bacillus thuringiensis isolates closely related to Bacillus anthracis.</title>
        <authorList>
            <person name="Han C.S."/>
            <person name="Xie G."/>
            <person name="Challacombe J.F."/>
            <person name="Altherr M.R."/>
            <person name="Bhotika S.S."/>
            <person name="Bruce D."/>
            <person name="Campbell C.S."/>
            <person name="Campbell M.L."/>
            <person name="Chen J."/>
            <person name="Chertkov O."/>
            <person name="Cleland C."/>
            <person name="Dimitrijevic M."/>
            <person name="Doggett N.A."/>
            <person name="Fawcett J.J."/>
            <person name="Glavina T."/>
            <person name="Goodwin L.A."/>
            <person name="Hill K.K."/>
            <person name="Hitchcock P."/>
            <person name="Jackson P.J."/>
            <person name="Keim P."/>
            <person name="Kewalramani A.R."/>
            <person name="Longmire J."/>
            <person name="Lucas S."/>
            <person name="Malfatti S."/>
            <person name="McMurry K."/>
            <person name="Meincke L.J."/>
            <person name="Misra M."/>
            <person name="Moseman B.L."/>
            <person name="Mundt M."/>
            <person name="Munk A.C."/>
            <person name="Okinaka R.T."/>
            <person name="Parson-Quintana B."/>
            <person name="Reilly L.P."/>
            <person name="Richardson P."/>
            <person name="Robinson D.L."/>
            <person name="Rubin E."/>
            <person name="Saunders E."/>
            <person name="Tapia R."/>
            <person name="Tesmer J.G."/>
            <person name="Thayer N."/>
            <person name="Thompson L.S."/>
            <person name="Tice H."/>
            <person name="Ticknor L.O."/>
            <person name="Wills P.L."/>
            <person name="Brettin T.S."/>
            <person name="Gilna P."/>
        </authorList>
    </citation>
    <scope>NUCLEOTIDE SEQUENCE [LARGE SCALE GENOMIC DNA]</scope>
    <source>
        <strain>97-27</strain>
    </source>
</reference>
<organism>
    <name type="scientific">Bacillus thuringiensis subsp. konkukian (strain 97-27)</name>
    <dbReference type="NCBI Taxonomy" id="281309"/>
    <lineage>
        <taxon>Bacteria</taxon>
        <taxon>Bacillati</taxon>
        <taxon>Bacillota</taxon>
        <taxon>Bacilli</taxon>
        <taxon>Bacillales</taxon>
        <taxon>Bacillaceae</taxon>
        <taxon>Bacillus</taxon>
        <taxon>Bacillus cereus group</taxon>
    </lineage>
</organism>
<feature type="chain" id="PRO_0000095619" description="RNA-binding protein Hfq">
    <location>
        <begin position="1"/>
        <end position="74"/>
    </location>
</feature>
<feature type="domain" description="Sm" evidence="2">
    <location>
        <begin position="9"/>
        <end position="69"/>
    </location>
</feature>
<name>HFQ_BACHK</name>